<gene>
    <name type="primary">OASB</name>
    <name type="ordered locus">At2g43750</name>
    <name type="ORF">F18O19.14</name>
</gene>
<evidence type="ECO:0000250" key="1"/>
<evidence type="ECO:0000269" key="2">
    <source>
    </source>
</evidence>
<evidence type="ECO:0000269" key="3">
    <source>
    </source>
</evidence>
<evidence type="ECO:0000269" key="4">
    <source>
    </source>
</evidence>
<evidence type="ECO:0000269" key="5">
    <source>
    </source>
</evidence>
<evidence type="ECO:0000269" key="6">
    <source>
    </source>
</evidence>
<evidence type="ECO:0000305" key="7"/>
<evidence type="ECO:0007744" key="8">
    <source>
    </source>
</evidence>
<reference key="1">
    <citation type="journal article" date="1994" name="FEBS Lett.">
        <title>Isolation and characterization of two cDNAs encoding for compartment specific isoforms of O-acetylserine (thiol) lyase from Arabidopsis thaliana.</title>
        <authorList>
            <person name="Hell R."/>
            <person name="Bork C."/>
            <person name="Bogdanova N."/>
            <person name="Frolov I."/>
            <person name="Hauschild R."/>
        </authorList>
    </citation>
    <scope>NUCLEOTIDE SEQUENCE [MRNA]</scope>
    <source>
        <strain>cv. Columbia</strain>
        <tissue>Leaf</tissue>
    </source>
</reference>
<reference key="2">
    <citation type="submission" date="2000-02" db="EMBL/GenBank/DDBJ databases">
        <authorList>
            <person name="Hell R."/>
        </authorList>
    </citation>
    <scope>SEQUENCE REVISION [MRNA]</scope>
</reference>
<reference key="3">
    <citation type="journal article" date="1995" name="Plant Physiol.">
        <title>Molecular cloning of a cysteine synthase cDNA from Arabidopsis thaliana.</title>
        <authorList>
            <person name="Hesse H."/>
            <person name="Altmann T."/>
        </authorList>
    </citation>
    <scope>NUCLEOTIDE SEQUENCE [MRNA]</scope>
    <source>
        <strain>cv. Columbia</strain>
    </source>
</reference>
<reference key="4">
    <citation type="journal article" date="2000" name="Gene">
        <title>Genomic and functional characterization of the oas gene family encoding O-acetylserine (thiol) lyases, enzymes catalyzing the final step in cysteine biosynthesis in Arabidopsis thaliana.</title>
        <authorList>
            <person name="Jost R."/>
            <person name="Berkowitz O."/>
            <person name="Wirtz M."/>
            <person name="Hopkins L."/>
            <person name="Hawkesford M.J."/>
            <person name="Hell R."/>
        </authorList>
    </citation>
    <scope>NUCLEOTIDE SEQUENCE [GENOMIC DNA]</scope>
    <scope>CATALYTIC ACTIVITY</scope>
    <scope>BIOPHYSICOCHEMICAL PROPERTIES</scope>
    <source>
        <strain>cv. Columbia</strain>
    </source>
</reference>
<reference key="5">
    <citation type="journal article" date="1999" name="Nature">
        <title>Sequence and analysis of chromosome 2 of the plant Arabidopsis thaliana.</title>
        <authorList>
            <person name="Lin X."/>
            <person name="Kaul S."/>
            <person name="Rounsley S.D."/>
            <person name="Shea T.P."/>
            <person name="Benito M.-I."/>
            <person name="Town C.D."/>
            <person name="Fujii C.Y."/>
            <person name="Mason T.M."/>
            <person name="Bowman C.L."/>
            <person name="Barnstead M.E."/>
            <person name="Feldblyum T.V."/>
            <person name="Buell C.R."/>
            <person name="Ketchum K.A."/>
            <person name="Lee J.J."/>
            <person name="Ronning C.M."/>
            <person name="Koo H.L."/>
            <person name="Moffat K.S."/>
            <person name="Cronin L.A."/>
            <person name="Shen M."/>
            <person name="Pai G."/>
            <person name="Van Aken S."/>
            <person name="Umayam L."/>
            <person name="Tallon L.J."/>
            <person name="Gill J.E."/>
            <person name="Adams M.D."/>
            <person name="Carrera A.J."/>
            <person name="Creasy T.H."/>
            <person name="Goodman H.M."/>
            <person name="Somerville C.R."/>
            <person name="Copenhaver G.P."/>
            <person name="Preuss D."/>
            <person name="Nierman W.C."/>
            <person name="White O."/>
            <person name="Eisen J.A."/>
            <person name="Salzberg S.L."/>
            <person name="Fraser C.M."/>
            <person name="Venter J.C."/>
        </authorList>
    </citation>
    <scope>NUCLEOTIDE SEQUENCE [LARGE SCALE GENOMIC DNA]</scope>
    <source>
        <strain>cv. Columbia</strain>
    </source>
</reference>
<reference key="6">
    <citation type="journal article" date="2017" name="Plant J.">
        <title>Araport11: a complete reannotation of the Arabidopsis thaliana reference genome.</title>
        <authorList>
            <person name="Cheng C.Y."/>
            <person name="Krishnakumar V."/>
            <person name="Chan A.P."/>
            <person name="Thibaud-Nissen F."/>
            <person name="Schobel S."/>
            <person name="Town C.D."/>
        </authorList>
    </citation>
    <scope>GENOME REANNOTATION</scope>
    <source>
        <strain>cv. Columbia</strain>
    </source>
</reference>
<reference key="7">
    <citation type="journal article" date="2003" name="Science">
        <title>Empirical analysis of transcriptional activity in the Arabidopsis genome.</title>
        <authorList>
            <person name="Yamada K."/>
            <person name="Lim J."/>
            <person name="Dale J.M."/>
            <person name="Chen H."/>
            <person name="Shinn P."/>
            <person name="Palm C.J."/>
            <person name="Southwick A.M."/>
            <person name="Wu H.C."/>
            <person name="Kim C.J."/>
            <person name="Nguyen M."/>
            <person name="Pham P.K."/>
            <person name="Cheuk R.F."/>
            <person name="Karlin-Newmann G."/>
            <person name="Liu S.X."/>
            <person name="Lam B."/>
            <person name="Sakano H."/>
            <person name="Wu T."/>
            <person name="Yu G."/>
            <person name="Miranda M."/>
            <person name="Quach H.L."/>
            <person name="Tripp M."/>
            <person name="Chang C.H."/>
            <person name="Lee J.M."/>
            <person name="Toriumi M.J."/>
            <person name="Chan M.M."/>
            <person name="Tang C.C."/>
            <person name="Onodera C.S."/>
            <person name="Deng J.M."/>
            <person name="Akiyama K."/>
            <person name="Ansari Y."/>
            <person name="Arakawa T."/>
            <person name="Banh J."/>
            <person name="Banno F."/>
            <person name="Bowser L."/>
            <person name="Brooks S.Y."/>
            <person name="Carninci P."/>
            <person name="Chao Q."/>
            <person name="Choy N."/>
            <person name="Enju A."/>
            <person name="Goldsmith A.D."/>
            <person name="Gurjal M."/>
            <person name="Hansen N.F."/>
            <person name="Hayashizaki Y."/>
            <person name="Johnson-Hopson C."/>
            <person name="Hsuan V.W."/>
            <person name="Iida K."/>
            <person name="Karnes M."/>
            <person name="Khan S."/>
            <person name="Koesema E."/>
            <person name="Ishida J."/>
            <person name="Jiang P.X."/>
            <person name="Jones T."/>
            <person name="Kawai J."/>
            <person name="Kamiya A."/>
            <person name="Meyers C."/>
            <person name="Nakajima M."/>
            <person name="Narusaka M."/>
            <person name="Seki M."/>
            <person name="Sakurai T."/>
            <person name="Satou M."/>
            <person name="Tamse R."/>
            <person name="Vaysberg M."/>
            <person name="Wallender E.K."/>
            <person name="Wong C."/>
            <person name="Yamamura Y."/>
            <person name="Yuan S."/>
            <person name="Shinozaki K."/>
            <person name="Davis R.W."/>
            <person name="Theologis A."/>
            <person name="Ecker J.R."/>
        </authorList>
    </citation>
    <scope>NUCLEOTIDE SEQUENCE [LARGE SCALE MRNA]</scope>
    <source>
        <strain>cv. Columbia</strain>
    </source>
</reference>
<reference key="8">
    <citation type="submission" date="2002-03" db="EMBL/GenBank/DDBJ databases">
        <title>Full-length cDNA from Arabidopsis thaliana.</title>
        <authorList>
            <person name="Brover V.V."/>
            <person name="Troukhan M.E."/>
            <person name="Alexandrov N.A."/>
            <person name="Lu Y.-P."/>
            <person name="Flavell R.B."/>
            <person name="Feldmann K.A."/>
        </authorList>
    </citation>
    <scope>NUCLEOTIDE SEQUENCE [LARGE SCALE MRNA]</scope>
</reference>
<reference key="9">
    <citation type="journal article" date="2000" name="Plant Physiol.">
        <title>beta-Cyanoalanine synthase is a mitochondrial cysteine synthase-like protein in spinach and Arabidopsis.</title>
        <authorList>
            <person name="Hatzfeld Y."/>
            <person name="Maruyama A."/>
            <person name="Schmidt A."/>
            <person name="Noji M."/>
            <person name="Ishizawa K."/>
            <person name="Saito K."/>
        </authorList>
    </citation>
    <scope>NOMENCLATURE</scope>
</reference>
<reference key="10">
    <citation type="journal article" date="2004" name="J. Exp. Bot.">
        <title>O-acetylserine (thiol) lyase: an enigmatic enzyme of plant cysteine biosynthesis revisited in Arabidopsis thaliana.</title>
        <authorList>
            <person name="Wirtz M."/>
            <person name="Droux M."/>
            <person name="Hell R."/>
        </authorList>
    </citation>
    <scope>CATALYTIC ACTIVITY</scope>
    <scope>BIOPHYSICOCHEMICAL PROPERTIES</scope>
</reference>
<reference key="11">
    <citation type="journal article" date="2005" name="Photosyn. Res.">
        <title>Synthesis of the sulfur amino acids: cysteine and methionine.</title>
        <authorList>
            <person name="Wirtz M."/>
            <person name="Droux M."/>
        </authorList>
    </citation>
    <scope>REVIEW</scope>
</reference>
<reference key="12">
    <citation type="journal article" date="2008" name="Plant Cell">
        <title>Analysis of the Arabidopsis O-acetylserine(thiol)lyase gene family demonstrates compartment-specific differences in the regulation of cysteine synthesis.</title>
        <authorList>
            <person name="Heeg C."/>
            <person name="Kruse C."/>
            <person name="Jost R."/>
            <person name="Gutensohn M."/>
            <person name="Ruppert T."/>
            <person name="Wirtz M."/>
            <person name="Hell R."/>
        </authorList>
    </citation>
    <scope>FUNCTION</scope>
    <scope>DISRUPTION PHENOTYPE</scope>
    <scope>IDENTIFICATION BY MASS SPECTROMETRY</scope>
</reference>
<reference key="13">
    <citation type="journal article" date="2008" name="Plant Physiol.">
        <title>Physiological roles of the beta-substituted alanine synthase gene family in Arabidopsis.</title>
        <authorList>
            <person name="Watanabe M."/>
            <person name="Kusano M."/>
            <person name="Oikawa A."/>
            <person name="Fukushima A."/>
            <person name="Noji M."/>
            <person name="Saito K."/>
        </authorList>
    </citation>
    <scope>GENE FAMILY</scope>
    <scope>FUNCTION</scope>
    <scope>DISRUPTION PHENOTYPE</scope>
</reference>
<reference key="14">
    <citation type="journal article" date="2010" name="Amino Acids">
        <title>Enzymes of cysteine synthesis show extensive and conserved modifications patterns that include N(alpha)-terminal acetylation.</title>
        <authorList>
            <person name="Wirtz M."/>
            <person name="Heeg C."/>
            <person name="Samami A.A."/>
            <person name="Ruppert T."/>
            <person name="Hell R."/>
        </authorList>
    </citation>
    <scope>ACETYLATION AT ALA-61</scope>
    <scope>IDENTIFICATION BY MASS SPECTROMETRY</scope>
</reference>
<reference key="15">
    <citation type="journal article" date="2012" name="Mol. Cell. Proteomics">
        <title>Comparative large-scale characterisation of plant vs. mammal proteins reveals similar and idiosyncratic N-alpha acetylation features.</title>
        <authorList>
            <person name="Bienvenut W.V."/>
            <person name="Sumpton D."/>
            <person name="Martinez A."/>
            <person name="Lilla S."/>
            <person name="Espagne C."/>
            <person name="Meinnel T."/>
            <person name="Giglione C."/>
        </authorList>
    </citation>
    <scope>ACETYLATION [LARGE SCALE ANALYSIS] AT ALA-61</scope>
    <scope>CLEAVAGE OF TRANSIT PEPTIDE [LARGE SCALE ANALYSIS] AFTER LYS-60</scope>
    <scope>IDENTIFICATION BY MASS SPECTROMETRY [LARGE SCALE ANALYSIS]</scope>
</reference>
<feature type="transit peptide" description="Chloroplast and chromoplast" evidence="8">
    <location>
        <begin position="1"/>
        <end position="60"/>
    </location>
</feature>
<feature type="chain" id="PRO_0000006349" description="Cysteine synthase, chloroplastic/chromoplastic">
    <location>
        <begin position="61"/>
        <end position="392"/>
    </location>
</feature>
<feature type="binding site" evidence="1">
    <location>
        <position position="147"/>
    </location>
    <ligand>
        <name>pyridoxal 5'-phosphate</name>
        <dbReference type="ChEBI" id="CHEBI:597326"/>
    </ligand>
</feature>
<feature type="binding site" evidence="1">
    <location>
        <begin position="251"/>
        <end position="255"/>
    </location>
    <ligand>
        <name>pyridoxal 5'-phosphate</name>
        <dbReference type="ChEBI" id="CHEBI:597326"/>
    </ligand>
</feature>
<feature type="binding site" evidence="1">
    <location>
        <position position="339"/>
    </location>
    <ligand>
        <name>pyridoxal 5'-phosphate</name>
        <dbReference type="ChEBI" id="CHEBI:597326"/>
    </ligand>
</feature>
<feature type="modified residue" description="N-acetylalanine" evidence="6 8">
    <location>
        <position position="61"/>
    </location>
</feature>
<feature type="modified residue" description="N6-(pyridoxal phosphate)lysine" evidence="1">
    <location>
        <position position="116"/>
    </location>
</feature>
<feature type="sequence conflict" description="In Ref. 3; CAA57344." evidence="7" ref="3">
    <original>G</original>
    <variation>N</variation>
    <location>
        <position position="232"/>
    </location>
</feature>
<feature type="sequence conflict" description="In Ref. 3; CAA57344." evidence="7" ref="3">
    <original>P</original>
    <variation>T</variation>
    <location>
        <position position="288"/>
    </location>
</feature>
<dbReference type="EC" id="2.5.1.47"/>
<dbReference type="EMBL" id="X80377">
    <property type="protein sequence ID" value="CAA56594.2"/>
    <property type="molecule type" value="mRNA"/>
</dbReference>
<dbReference type="EMBL" id="X81698">
    <property type="protein sequence ID" value="CAA57344.1"/>
    <property type="molecule type" value="mRNA"/>
</dbReference>
<dbReference type="EMBL" id="AJ271728">
    <property type="protein sequence ID" value="CAB71292.1"/>
    <property type="molecule type" value="Genomic_DNA"/>
</dbReference>
<dbReference type="EMBL" id="AC002333">
    <property type="protein sequence ID" value="AAB64031.1"/>
    <property type="molecule type" value="Genomic_DNA"/>
</dbReference>
<dbReference type="EMBL" id="CP002685">
    <property type="protein sequence ID" value="AEC10317.1"/>
    <property type="molecule type" value="Genomic_DNA"/>
</dbReference>
<dbReference type="EMBL" id="CP002685">
    <property type="protein sequence ID" value="AEC10318.1"/>
    <property type="molecule type" value="Genomic_DNA"/>
</dbReference>
<dbReference type="EMBL" id="AY065375">
    <property type="protein sequence ID" value="AAL38816.1"/>
    <property type="molecule type" value="mRNA"/>
</dbReference>
<dbReference type="EMBL" id="AY096681">
    <property type="protein sequence ID" value="AAM20315.1"/>
    <property type="molecule type" value="mRNA"/>
</dbReference>
<dbReference type="EMBL" id="AY086156">
    <property type="protein sequence ID" value="AAM63361.1"/>
    <property type="molecule type" value="mRNA"/>
</dbReference>
<dbReference type="PIR" id="A84870">
    <property type="entry name" value="A84870"/>
</dbReference>
<dbReference type="PIR" id="S48695">
    <property type="entry name" value="S48695"/>
</dbReference>
<dbReference type="RefSeq" id="NP_001189745.1">
    <property type="nucleotide sequence ID" value="NM_001202816.1"/>
</dbReference>
<dbReference type="RefSeq" id="NP_181903.1">
    <property type="nucleotide sequence ID" value="NM_129937.4"/>
</dbReference>
<dbReference type="SMR" id="P47999"/>
<dbReference type="BioGRID" id="4314">
    <property type="interactions" value="7"/>
</dbReference>
<dbReference type="FunCoup" id="P47999">
    <property type="interactions" value="2178"/>
</dbReference>
<dbReference type="IntAct" id="P47999">
    <property type="interactions" value="1"/>
</dbReference>
<dbReference type="STRING" id="3702.P47999"/>
<dbReference type="GlyGen" id="P47999">
    <property type="glycosylation" value="1 site"/>
</dbReference>
<dbReference type="iPTMnet" id="P47999"/>
<dbReference type="MetOSite" id="P47999"/>
<dbReference type="PaxDb" id="3702-AT2G43750.1"/>
<dbReference type="ProteomicsDB" id="222775"/>
<dbReference type="EnsemblPlants" id="AT2G43750.1">
    <property type="protein sequence ID" value="AT2G43750.1"/>
    <property type="gene ID" value="AT2G43750"/>
</dbReference>
<dbReference type="EnsemblPlants" id="AT2G43750.2">
    <property type="protein sequence ID" value="AT2G43750.2"/>
    <property type="gene ID" value="AT2G43750"/>
</dbReference>
<dbReference type="GeneID" id="818978"/>
<dbReference type="Gramene" id="AT2G43750.1">
    <property type="protein sequence ID" value="AT2G43750.1"/>
    <property type="gene ID" value="AT2G43750"/>
</dbReference>
<dbReference type="Gramene" id="AT2G43750.2">
    <property type="protein sequence ID" value="AT2G43750.2"/>
    <property type="gene ID" value="AT2G43750"/>
</dbReference>
<dbReference type="KEGG" id="ath:AT2G43750"/>
<dbReference type="Araport" id="AT2G43750"/>
<dbReference type="TAIR" id="AT2G43750">
    <property type="gene designation" value="OASB"/>
</dbReference>
<dbReference type="eggNOG" id="KOG1252">
    <property type="taxonomic scope" value="Eukaryota"/>
</dbReference>
<dbReference type="HOGENOM" id="CLU_021018_1_1_1"/>
<dbReference type="InParanoid" id="P47999"/>
<dbReference type="OMA" id="NAWIPQQ"/>
<dbReference type="OrthoDB" id="10259545at2759"/>
<dbReference type="PhylomeDB" id="P47999"/>
<dbReference type="BioCyc" id="MetaCyc:AT2G43750-MONOMER"/>
<dbReference type="BRENDA" id="2.5.1.47">
    <property type="organism ID" value="399"/>
</dbReference>
<dbReference type="UniPathway" id="UPA00136">
    <property type="reaction ID" value="UER00200"/>
</dbReference>
<dbReference type="CD-CODE" id="4299E36E">
    <property type="entry name" value="Nucleolus"/>
</dbReference>
<dbReference type="PRO" id="PR:P47999"/>
<dbReference type="Proteomes" id="UP000006548">
    <property type="component" value="Chromosome 2"/>
</dbReference>
<dbReference type="ExpressionAtlas" id="P47999">
    <property type="expression patterns" value="baseline and differential"/>
</dbReference>
<dbReference type="GO" id="GO:0048046">
    <property type="term" value="C:apoplast"/>
    <property type="evidence" value="ECO:0007005"/>
    <property type="project" value="TAIR"/>
</dbReference>
<dbReference type="GO" id="GO:0009507">
    <property type="term" value="C:chloroplast"/>
    <property type="evidence" value="ECO:0007005"/>
    <property type="project" value="TAIR"/>
</dbReference>
<dbReference type="GO" id="GO:0009941">
    <property type="term" value="C:chloroplast envelope"/>
    <property type="evidence" value="ECO:0007005"/>
    <property type="project" value="TAIR"/>
</dbReference>
<dbReference type="GO" id="GO:0009570">
    <property type="term" value="C:chloroplast stroma"/>
    <property type="evidence" value="ECO:0007005"/>
    <property type="project" value="TAIR"/>
</dbReference>
<dbReference type="GO" id="GO:0009509">
    <property type="term" value="C:chromoplast"/>
    <property type="evidence" value="ECO:0007669"/>
    <property type="project" value="UniProtKB-SubCell"/>
</dbReference>
<dbReference type="GO" id="GO:0005829">
    <property type="term" value="C:cytosol"/>
    <property type="evidence" value="ECO:0007005"/>
    <property type="project" value="TAIR"/>
</dbReference>
<dbReference type="GO" id="GO:0005768">
    <property type="term" value="C:endosome"/>
    <property type="evidence" value="ECO:0007005"/>
    <property type="project" value="TAIR"/>
</dbReference>
<dbReference type="GO" id="GO:0005794">
    <property type="term" value="C:Golgi apparatus"/>
    <property type="evidence" value="ECO:0007005"/>
    <property type="project" value="TAIR"/>
</dbReference>
<dbReference type="GO" id="GO:0005739">
    <property type="term" value="C:mitochondrion"/>
    <property type="evidence" value="ECO:0007005"/>
    <property type="project" value="TAIR"/>
</dbReference>
<dbReference type="GO" id="GO:0009536">
    <property type="term" value="C:plastid"/>
    <property type="evidence" value="ECO:0000304"/>
    <property type="project" value="TAIR"/>
</dbReference>
<dbReference type="GO" id="GO:0005802">
    <property type="term" value="C:trans-Golgi network"/>
    <property type="evidence" value="ECO:0007005"/>
    <property type="project" value="TAIR"/>
</dbReference>
<dbReference type="GO" id="GO:0004124">
    <property type="term" value="F:cysteine synthase activity"/>
    <property type="evidence" value="ECO:0000314"/>
    <property type="project" value="TAIR"/>
</dbReference>
<dbReference type="GO" id="GO:0019344">
    <property type="term" value="P:cysteine biosynthetic process"/>
    <property type="evidence" value="ECO:0000314"/>
    <property type="project" value="TAIR"/>
</dbReference>
<dbReference type="GO" id="GO:0006535">
    <property type="term" value="P:cysteine biosynthetic process from serine"/>
    <property type="evidence" value="ECO:0007669"/>
    <property type="project" value="InterPro"/>
</dbReference>
<dbReference type="GO" id="GO:0009567">
    <property type="term" value="P:double fertilization forming a zygote and endosperm"/>
    <property type="evidence" value="ECO:0000316"/>
    <property type="project" value="TAIR"/>
</dbReference>
<dbReference type="GO" id="GO:0009860">
    <property type="term" value="P:pollen tube growth"/>
    <property type="evidence" value="ECO:0000316"/>
    <property type="project" value="TAIR"/>
</dbReference>
<dbReference type="CDD" id="cd01561">
    <property type="entry name" value="CBS_like"/>
    <property type="match status" value="1"/>
</dbReference>
<dbReference type="FunFam" id="3.40.50.1100:FF:000067">
    <property type="entry name" value="Cysteine synthase"/>
    <property type="match status" value="1"/>
</dbReference>
<dbReference type="FunFam" id="3.40.50.1100:FF:000130">
    <property type="entry name" value="Cysteine synthase"/>
    <property type="match status" value="1"/>
</dbReference>
<dbReference type="Gene3D" id="3.40.50.1100">
    <property type="match status" value="2"/>
</dbReference>
<dbReference type="InterPro" id="IPR005856">
    <property type="entry name" value="Cys_synth"/>
</dbReference>
<dbReference type="InterPro" id="IPR050214">
    <property type="entry name" value="Cys_Synth/Cystath_Beta-Synth"/>
</dbReference>
<dbReference type="InterPro" id="IPR005859">
    <property type="entry name" value="CysK"/>
</dbReference>
<dbReference type="InterPro" id="IPR001216">
    <property type="entry name" value="P-phosphate_BS"/>
</dbReference>
<dbReference type="InterPro" id="IPR001926">
    <property type="entry name" value="TrpB-like_PALP"/>
</dbReference>
<dbReference type="InterPro" id="IPR036052">
    <property type="entry name" value="TrpB-like_PALP_sf"/>
</dbReference>
<dbReference type="NCBIfam" id="TIGR01139">
    <property type="entry name" value="cysK"/>
    <property type="match status" value="1"/>
</dbReference>
<dbReference type="NCBIfam" id="TIGR01136">
    <property type="entry name" value="cysKM"/>
    <property type="match status" value="1"/>
</dbReference>
<dbReference type="PANTHER" id="PTHR10314">
    <property type="entry name" value="CYSTATHIONINE BETA-SYNTHASE"/>
    <property type="match status" value="1"/>
</dbReference>
<dbReference type="Pfam" id="PF00291">
    <property type="entry name" value="PALP"/>
    <property type="match status" value="1"/>
</dbReference>
<dbReference type="SUPFAM" id="SSF53686">
    <property type="entry name" value="Tryptophan synthase beta subunit-like PLP-dependent enzymes"/>
    <property type="match status" value="1"/>
</dbReference>
<dbReference type="PROSITE" id="PS00901">
    <property type="entry name" value="CYS_SYNTHASE"/>
    <property type="match status" value="1"/>
</dbReference>
<protein>
    <recommendedName>
        <fullName>Cysteine synthase, chloroplastic/chromoplastic</fullName>
        <ecNumber>2.5.1.47</ecNumber>
    </recommendedName>
    <alternativeName>
        <fullName>At.OAS.7-4</fullName>
    </alternativeName>
    <alternativeName>
        <fullName>Beta-substituted Ala synthase 2;1</fullName>
        <shortName>ARAth-Bsas2;1</shortName>
    </alternativeName>
    <alternativeName>
        <fullName>CSase B</fullName>
        <shortName>AtCS-B</shortName>
        <shortName>CS-B</shortName>
    </alternativeName>
    <alternativeName>
        <fullName>O-acetylserine (thiol)-lyase</fullName>
    </alternativeName>
    <alternativeName>
        <fullName>O-acetylserine sulfhydrylase</fullName>
    </alternativeName>
    <alternativeName>
        <fullName>OAS-TL B</fullName>
    </alternativeName>
    <alternativeName>
        <fullName>cpACS1</fullName>
    </alternativeName>
</protein>
<accession>P47999</accession>
<accession>O22828</accession>
<accession>Q42568</accession>
<sequence>MAATSSSAFLLNPLTSRHRPFKYSPELSSLSLSSRKAAAFDVSSAAFTLKRQSRSDVVCKAVSIKPEAGVEGLNIADNAAQLIGKTPMVYLNNVVKGCVASVAAKLEIMEPCCSVKDRIGYSMITDAEEKGLITPGKSVLVESTSGNTGIGLAFIAASKGYKLILTMPASMSLERRVLLRAFGAELVLTEPAKGMTGAIQKAEEILKKTPNSYMLQQFDNPANPKIHYETTGPEIWEDTRGKIDILVAGIGTGGTITGVGRFIKERKPELKVIGVEPTESAILSGGKPGPHKIQGIGAGFVPKNLDLAIVDEYIAISSEEAIETSKQLALQEGLLVGISSGAAAAAAIQVAKRPENAGKLIAVVFPSFGERYLSTQLFQSIREECEQMQPEL</sequence>
<organism>
    <name type="scientific">Arabidopsis thaliana</name>
    <name type="common">Mouse-ear cress</name>
    <dbReference type="NCBI Taxonomy" id="3702"/>
    <lineage>
        <taxon>Eukaryota</taxon>
        <taxon>Viridiplantae</taxon>
        <taxon>Streptophyta</taxon>
        <taxon>Embryophyta</taxon>
        <taxon>Tracheophyta</taxon>
        <taxon>Spermatophyta</taxon>
        <taxon>Magnoliopsida</taxon>
        <taxon>eudicotyledons</taxon>
        <taxon>Gunneridae</taxon>
        <taxon>Pentapetalae</taxon>
        <taxon>rosids</taxon>
        <taxon>malvids</taxon>
        <taxon>Brassicales</taxon>
        <taxon>Brassicaceae</taxon>
        <taxon>Camelineae</taxon>
        <taxon>Arabidopsis</taxon>
    </lineage>
</organism>
<comment type="function">
    <text evidence="4 5">Acts as a major cysteine synthase.</text>
</comment>
<comment type="catalytic activity">
    <reaction evidence="2 3">
        <text>O-acetyl-L-serine + hydrogen sulfide = L-cysteine + acetate</text>
        <dbReference type="Rhea" id="RHEA:14829"/>
        <dbReference type="ChEBI" id="CHEBI:29919"/>
        <dbReference type="ChEBI" id="CHEBI:30089"/>
        <dbReference type="ChEBI" id="CHEBI:35235"/>
        <dbReference type="ChEBI" id="CHEBI:58340"/>
        <dbReference type="EC" id="2.5.1.47"/>
    </reaction>
</comment>
<comment type="cofactor">
    <cofactor>
        <name>pyridoxal 5'-phosphate</name>
        <dbReference type="ChEBI" id="CHEBI:597326"/>
    </cofactor>
</comment>
<comment type="biophysicochemical properties">
    <kinetics>
        <KM evidence="2 3">0.81 mM for O(3)-acetyl-L-serine for the cysteine synthase activity</KM>
        <KM evidence="2 3">0.31 mM for O(3)-acetyl-L-serine for the cysteine synthase activity</KM>
        <KM evidence="2 3">3 uM for H(2)S for the cysteine synthase activity</KM>
        <Vmax evidence="2 3">171.0 umol/min/mg enzyme for L-cysteine for the cysteine synthase activity</Vmax>
        <Vmax evidence="2 3">592.0 umol/min/mg enzyme for L-cysteine for the cysteine synthase activity</Vmax>
        <Vmax evidence="2 3">0.37 umol/min/mg enzyme for H(2)S for the L-3-cyanoalanine synthase activity</Vmax>
    </kinetics>
</comment>
<comment type="pathway">
    <text>Amino-acid biosynthesis; L-cysteine biosynthesis; L-cysteine from L-serine: step 2/2.</text>
</comment>
<comment type="subunit">
    <text evidence="1">Homodimer. Component of the cysteine synthase complex (CSC) composed of two OAS-TL dimers and one SAT hexamer (By similarity).</text>
</comment>
<comment type="subcellular location">
    <subcellularLocation>
        <location>Plastid</location>
        <location>Chloroplast stroma</location>
    </subcellularLocation>
    <subcellularLocation>
        <location>Plastid</location>
        <location>Chromoplast</location>
    </subcellularLocation>
</comment>
<comment type="disruption phenotype">
    <text evidence="4 5">No visible phenotype.</text>
</comment>
<comment type="similarity">
    <text evidence="7">Belongs to the cysteine synthase/cystathionine beta-synthase family.</text>
</comment>
<name>CYSKP_ARATH</name>
<keyword id="KW-0007">Acetylation</keyword>
<keyword id="KW-0028">Amino-acid biosynthesis</keyword>
<keyword id="KW-0150">Chloroplast</keyword>
<keyword id="KW-0957">Chromoplast</keyword>
<keyword id="KW-0198">Cysteine biosynthesis</keyword>
<keyword id="KW-0934">Plastid</keyword>
<keyword id="KW-0663">Pyridoxal phosphate</keyword>
<keyword id="KW-1185">Reference proteome</keyword>
<keyword id="KW-0808">Transferase</keyword>
<keyword id="KW-0809">Transit peptide</keyword>
<proteinExistence type="evidence at protein level"/>